<evidence type="ECO:0000255" key="1">
    <source>
        <dbReference type="HAMAP-Rule" id="MF_01496"/>
    </source>
</evidence>
<gene>
    <name evidence="1" type="primary">psbC</name>
</gene>
<keyword id="KW-0007">Acetylation</keyword>
<keyword id="KW-0148">Chlorophyll</keyword>
<keyword id="KW-0150">Chloroplast</keyword>
<keyword id="KW-0157">Chromophore</keyword>
<keyword id="KW-0464">Manganese</keyword>
<keyword id="KW-0472">Membrane</keyword>
<keyword id="KW-0479">Metal-binding</keyword>
<keyword id="KW-0597">Phosphoprotein</keyword>
<keyword id="KW-0602">Photosynthesis</keyword>
<keyword id="KW-0604">Photosystem II</keyword>
<keyword id="KW-0934">Plastid</keyword>
<keyword id="KW-0793">Thylakoid</keyword>
<keyword id="KW-0812">Transmembrane</keyword>
<keyword id="KW-1133">Transmembrane helix</keyword>
<name>PSBC_NICTO</name>
<accession>Q33C41</accession>
<geneLocation type="chloroplast"/>
<reference key="1">
    <citation type="journal article" date="2006" name="Mol. Genet. Genomics">
        <title>The chloroplast genome of Nicotiana sylvestris and Nicotiana tomentosiformis: complete sequencing confirms that the Nicotiana sylvestris progenitor is the maternal genome donor of Nicotiana tabacum.</title>
        <authorList>
            <person name="Yukawa M."/>
            <person name="Tsudzuki T."/>
            <person name="Sugiura M."/>
        </authorList>
    </citation>
    <scope>NUCLEOTIDE SEQUENCE [LARGE SCALE GENOMIC DNA]</scope>
</reference>
<dbReference type="EMBL" id="AB240139">
    <property type="protein sequence ID" value="BAE47994.1"/>
    <property type="molecule type" value="Genomic_DNA"/>
</dbReference>
<dbReference type="RefSeq" id="YP_398856.1">
    <property type="nucleotide sequence ID" value="NC_007602.1"/>
</dbReference>
<dbReference type="SMR" id="Q33C41"/>
<dbReference type="GeneID" id="3776369"/>
<dbReference type="KEGG" id="nto:3776369"/>
<dbReference type="OrthoDB" id="1273448at2759"/>
<dbReference type="GO" id="GO:0009535">
    <property type="term" value="C:chloroplast thylakoid membrane"/>
    <property type="evidence" value="ECO:0007669"/>
    <property type="project" value="UniProtKB-SubCell"/>
</dbReference>
<dbReference type="GO" id="GO:0009523">
    <property type="term" value="C:photosystem II"/>
    <property type="evidence" value="ECO:0007669"/>
    <property type="project" value="UniProtKB-KW"/>
</dbReference>
<dbReference type="GO" id="GO:0016168">
    <property type="term" value="F:chlorophyll binding"/>
    <property type="evidence" value="ECO:0007669"/>
    <property type="project" value="UniProtKB-UniRule"/>
</dbReference>
<dbReference type="GO" id="GO:0045156">
    <property type="term" value="F:electron transporter, transferring electrons within the cyclic electron transport pathway of photosynthesis activity"/>
    <property type="evidence" value="ECO:0007669"/>
    <property type="project" value="InterPro"/>
</dbReference>
<dbReference type="GO" id="GO:0046872">
    <property type="term" value="F:metal ion binding"/>
    <property type="evidence" value="ECO:0007669"/>
    <property type="project" value="UniProtKB-KW"/>
</dbReference>
<dbReference type="GO" id="GO:0009772">
    <property type="term" value="P:photosynthetic electron transport in photosystem II"/>
    <property type="evidence" value="ECO:0007669"/>
    <property type="project" value="InterPro"/>
</dbReference>
<dbReference type="FunFam" id="1.10.10.670:FF:000001">
    <property type="entry name" value="Photosystem II CP43 reaction center protein"/>
    <property type="match status" value="1"/>
</dbReference>
<dbReference type="Gene3D" id="1.10.10.670">
    <property type="entry name" value="photosystem ii from thermosynechococcus elongatus"/>
    <property type="match status" value="1"/>
</dbReference>
<dbReference type="HAMAP" id="MF_01496">
    <property type="entry name" value="PSII_PsbC_CP43"/>
    <property type="match status" value="1"/>
</dbReference>
<dbReference type="InterPro" id="IPR000932">
    <property type="entry name" value="PS_antenna-like"/>
</dbReference>
<dbReference type="InterPro" id="IPR036001">
    <property type="entry name" value="PS_II_antenna-like_sf"/>
</dbReference>
<dbReference type="InterPro" id="IPR005869">
    <property type="entry name" value="PSII_PsbC"/>
</dbReference>
<dbReference type="InterPro" id="IPR044900">
    <property type="entry name" value="PSII_PsbC_sf"/>
</dbReference>
<dbReference type="NCBIfam" id="TIGR01153">
    <property type="entry name" value="psbC"/>
    <property type="match status" value="1"/>
</dbReference>
<dbReference type="Pfam" id="PF00421">
    <property type="entry name" value="PSII"/>
    <property type="match status" value="1"/>
</dbReference>
<dbReference type="SUPFAM" id="SSF161077">
    <property type="entry name" value="Photosystem II antenna protein-like"/>
    <property type="match status" value="1"/>
</dbReference>
<feature type="propeptide" id="PRO_0000431173" evidence="1">
    <location>
        <begin position="1"/>
        <end position="2"/>
    </location>
</feature>
<feature type="chain" id="PRO_0000361434" description="Photosystem II CP43 reaction center protein" evidence="1">
    <location>
        <begin position="3"/>
        <end position="461"/>
    </location>
</feature>
<feature type="transmembrane region" description="Helical" evidence="1">
    <location>
        <begin position="57"/>
        <end position="81"/>
    </location>
</feature>
<feature type="transmembrane region" description="Helical" evidence="1">
    <location>
        <begin position="122"/>
        <end position="143"/>
    </location>
</feature>
<feature type="transmembrane region" description="Helical" evidence="1">
    <location>
        <begin position="166"/>
        <end position="188"/>
    </location>
</feature>
<feature type="transmembrane region" description="Helical" evidence="1">
    <location>
        <begin position="243"/>
        <end position="263"/>
    </location>
</feature>
<feature type="transmembrane region" description="Helical" evidence="1">
    <location>
        <begin position="279"/>
        <end position="300"/>
    </location>
</feature>
<feature type="transmembrane region" description="Helical" evidence="1">
    <location>
        <begin position="435"/>
        <end position="459"/>
    </location>
</feature>
<feature type="binding site" evidence="1">
    <location>
        <position position="355"/>
    </location>
    <ligand>
        <name>[CaMn4O5] cluster</name>
        <dbReference type="ChEBI" id="CHEBI:189552"/>
    </ligand>
</feature>
<feature type="modified residue" description="N-acetylthreonine" evidence="1">
    <location>
        <position position="3"/>
    </location>
</feature>
<feature type="modified residue" description="Phosphothreonine" evidence="1">
    <location>
        <position position="3"/>
    </location>
</feature>
<protein>
    <recommendedName>
        <fullName evidence="1">Photosystem II CP43 reaction center protein</fullName>
    </recommendedName>
    <alternativeName>
        <fullName evidence="1">PSII 43 kDa protein</fullName>
    </alternativeName>
    <alternativeName>
        <fullName evidence="1">Protein CP-43</fullName>
    </alternativeName>
</protein>
<proteinExistence type="inferred from homology"/>
<organism>
    <name type="scientific">Nicotiana tomentosiformis</name>
    <name type="common">Tobacco</name>
    <dbReference type="NCBI Taxonomy" id="4098"/>
    <lineage>
        <taxon>Eukaryota</taxon>
        <taxon>Viridiplantae</taxon>
        <taxon>Streptophyta</taxon>
        <taxon>Embryophyta</taxon>
        <taxon>Tracheophyta</taxon>
        <taxon>Spermatophyta</taxon>
        <taxon>Magnoliopsida</taxon>
        <taxon>eudicotyledons</taxon>
        <taxon>Gunneridae</taxon>
        <taxon>Pentapetalae</taxon>
        <taxon>asterids</taxon>
        <taxon>lamiids</taxon>
        <taxon>Solanales</taxon>
        <taxon>Solanaceae</taxon>
        <taxon>Nicotianoideae</taxon>
        <taxon>Nicotianeae</taxon>
        <taxon>Nicotiana</taxon>
    </lineage>
</organism>
<comment type="function">
    <text evidence="1">One of the components of the core complex of photosystem II (PSII). It binds chlorophyll and helps catalyze the primary light-induced photochemical processes of PSII. PSII is a light-driven water:plastoquinone oxidoreductase, using light energy to abstract electrons from H(2)O, generating O(2) and a proton gradient subsequently used for ATP formation.</text>
</comment>
<comment type="cofactor">
    <text evidence="1">Binds multiple chlorophylls and provides some of the ligands for the Ca-4Mn-5O cluster of the oxygen-evolving complex. It may also provide a ligand for a Cl- that is required for oxygen evolution. PSII binds additional chlorophylls, carotenoids and specific lipids.</text>
</comment>
<comment type="subunit">
    <text evidence="1">PSII is composed of 1 copy each of membrane proteins PsbA, PsbB, PsbC, PsbD, PsbE, PsbF, PsbH, PsbI, PsbJ, PsbK, PsbL, PsbM, PsbT, PsbX, PsbY, PsbZ, Psb30/Ycf12, at least 3 peripheral proteins of the oxygen-evolving complex and a large number of cofactors. It forms dimeric complexes.</text>
</comment>
<comment type="subcellular location">
    <subcellularLocation>
        <location evidence="1">Plastid</location>
        <location evidence="1">Chloroplast thylakoid membrane</location>
        <topology evidence="1">Multi-pass membrane protein</topology>
    </subcellularLocation>
</comment>
<comment type="similarity">
    <text evidence="1">Belongs to the PsbB/PsbC family. PsbC subfamily.</text>
</comment>
<sequence length="461" mass="50345">METLFNGTLALAGRDQETTGFAWWAGNARLINLSGKLLGAHVAHAGLIVFWAGAMNLFEVAHFVPEKPMYEQGLILLPHLATLGWGVGPGGEVIDTFPYFVSGVLHLISSAVLGFGGIYHALLGPETLEESFPFFGYVWKDRNKMTTILGIHLILLGLGAFLLVFKALYFGGVYDTWAPGGGDVRKITNLTLSPSIIFGYLLKSPFGGEGWIVSVDDLEDIIGGHVWLGSICILGGIWHILTKPFAWARRALVWSGEAYLSYSLGALSVFGFIACCFVWFNNTAYPSEFYGPTGPEASQAQAFTFLVRDQRLGANVGSAQGPTGLGKYLMRSPTGEVIFGGETMRFWDLRAPWLEPLRGPNGLDLSRLKKDIQPWQERRSAEYMTHAPLGSLNSVGGVATEINAVNYVSPRSWLATSHFVLGFFFFVGHLWHAGRARAAAAGFEKGIDRDFEPVLSMTPLN</sequence>